<protein>
    <recommendedName>
        <fullName evidence="1">Ribonuclease H</fullName>
        <shortName evidence="1">RNase H</shortName>
        <ecNumber evidence="1">3.1.26.4</ecNumber>
    </recommendedName>
</protein>
<dbReference type="EC" id="3.1.26.4" evidence="1"/>
<dbReference type="EMBL" id="AM040264">
    <property type="protein sequence ID" value="CAJ10459.1"/>
    <property type="molecule type" value="Genomic_DNA"/>
</dbReference>
<dbReference type="RefSeq" id="WP_002963635.1">
    <property type="nucleotide sequence ID" value="NZ_KN046823.1"/>
</dbReference>
<dbReference type="SMR" id="Q2YMI3"/>
<dbReference type="STRING" id="359391.BAB1_0503"/>
<dbReference type="GeneID" id="97534154"/>
<dbReference type="KEGG" id="bmf:BAB1_0503"/>
<dbReference type="PATRIC" id="fig|359391.11.peg.2541"/>
<dbReference type="HOGENOM" id="CLU_030894_6_0_5"/>
<dbReference type="PhylomeDB" id="Q2YMI3"/>
<dbReference type="Proteomes" id="UP000002719">
    <property type="component" value="Chromosome I"/>
</dbReference>
<dbReference type="GO" id="GO:0005737">
    <property type="term" value="C:cytoplasm"/>
    <property type="evidence" value="ECO:0007669"/>
    <property type="project" value="UniProtKB-SubCell"/>
</dbReference>
<dbReference type="GO" id="GO:0000287">
    <property type="term" value="F:magnesium ion binding"/>
    <property type="evidence" value="ECO:0007669"/>
    <property type="project" value="UniProtKB-UniRule"/>
</dbReference>
<dbReference type="GO" id="GO:0003676">
    <property type="term" value="F:nucleic acid binding"/>
    <property type="evidence" value="ECO:0007669"/>
    <property type="project" value="InterPro"/>
</dbReference>
<dbReference type="GO" id="GO:0004523">
    <property type="term" value="F:RNA-DNA hybrid ribonuclease activity"/>
    <property type="evidence" value="ECO:0007669"/>
    <property type="project" value="UniProtKB-UniRule"/>
</dbReference>
<dbReference type="GO" id="GO:0043137">
    <property type="term" value="P:DNA replication, removal of RNA primer"/>
    <property type="evidence" value="ECO:0007669"/>
    <property type="project" value="TreeGrafter"/>
</dbReference>
<dbReference type="CDD" id="cd09278">
    <property type="entry name" value="RNase_HI_prokaryote_like"/>
    <property type="match status" value="1"/>
</dbReference>
<dbReference type="FunFam" id="3.30.420.10:FF:000089">
    <property type="entry name" value="Ribonuclease H"/>
    <property type="match status" value="1"/>
</dbReference>
<dbReference type="Gene3D" id="3.30.420.10">
    <property type="entry name" value="Ribonuclease H-like superfamily/Ribonuclease H"/>
    <property type="match status" value="1"/>
</dbReference>
<dbReference type="HAMAP" id="MF_00042">
    <property type="entry name" value="RNase_H"/>
    <property type="match status" value="1"/>
</dbReference>
<dbReference type="InterPro" id="IPR050092">
    <property type="entry name" value="RNase_H"/>
</dbReference>
<dbReference type="InterPro" id="IPR012337">
    <property type="entry name" value="RNaseH-like_sf"/>
</dbReference>
<dbReference type="InterPro" id="IPR002156">
    <property type="entry name" value="RNaseH_domain"/>
</dbReference>
<dbReference type="InterPro" id="IPR036397">
    <property type="entry name" value="RNaseH_sf"/>
</dbReference>
<dbReference type="InterPro" id="IPR022892">
    <property type="entry name" value="RNaseHI"/>
</dbReference>
<dbReference type="NCBIfam" id="NF001236">
    <property type="entry name" value="PRK00203.1"/>
    <property type="match status" value="1"/>
</dbReference>
<dbReference type="PANTHER" id="PTHR10642">
    <property type="entry name" value="RIBONUCLEASE H1"/>
    <property type="match status" value="1"/>
</dbReference>
<dbReference type="PANTHER" id="PTHR10642:SF26">
    <property type="entry name" value="RIBONUCLEASE H1"/>
    <property type="match status" value="1"/>
</dbReference>
<dbReference type="Pfam" id="PF00075">
    <property type="entry name" value="RNase_H"/>
    <property type="match status" value="1"/>
</dbReference>
<dbReference type="SUPFAM" id="SSF53098">
    <property type="entry name" value="Ribonuclease H-like"/>
    <property type="match status" value="1"/>
</dbReference>
<dbReference type="PROSITE" id="PS50879">
    <property type="entry name" value="RNASE_H_1"/>
    <property type="match status" value="1"/>
</dbReference>
<proteinExistence type="inferred from homology"/>
<organism>
    <name type="scientific">Brucella abortus (strain 2308)</name>
    <dbReference type="NCBI Taxonomy" id="359391"/>
    <lineage>
        <taxon>Bacteria</taxon>
        <taxon>Pseudomonadati</taxon>
        <taxon>Pseudomonadota</taxon>
        <taxon>Alphaproteobacteria</taxon>
        <taxon>Hyphomicrobiales</taxon>
        <taxon>Brucellaceae</taxon>
        <taxon>Brucella/Ochrobactrum group</taxon>
        <taxon>Brucella</taxon>
    </lineage>
</organism>
<name>RNH_BRUA2</name>
<comment type="function">
    <text evidence="1">Endonuclease that specifically degrades the RNA of RNA-DNA hybrids.</text>
</comment>
<comment type="catalytic activity">
    <reaction evidence="1">
        <text>Endonucleolytic cleavage to 5'-phosphomonoester.</text>
        <dbReference type="EC" id="3.1.26.4"/>
    </reaction>
</comment>
<comment type="cofactor">
    <cofactor evidence="1">
        <name>Mg(2+)</name>
        <dbReference type="ChEBI" id="CHEBI:18420"/>
    </cofactor>
    <text evidence="1">Binds 1 Mg(2+) ion per subunit. May bind a second metal ion at a regulatory site, or after substrate binding.</text>
</comment>
<comment type="subunit">
    <text evidence="1">Monomer.</text>
</comment>
<comment type="subcellular location">
    <subcellularLocation>
        <location evidence="1">Cytoplasm</location>
    </subcellularLocation>
</comment>
<comment type="similarity">
    <text evidence="1">Belongs to the RNase H family.</text>
</comment>
<gene>
    <name evidence="1" type="primary">rnhA</name>
    <name type="ordered locus">BAB1_0503</name>
</gene>
<feature type="chain" id="PRO_0000332567" description="Ribonuclease H">
    <location>
        <begin position="1"/>
        <end position="154"/>
    </location>
</feature>
<feature type="domain" description="RNase H type-1" evidence="2">
    <location>
        <begin position="1"/>
        <end position="141"/>
    </location>
</feature>
<feature type="binding site" evidence="1">
    <location>
        <position position="9"/>
    </location>
    <ligand>
        <name>Mg(2+)</name>
        <dbReference type="ChEBI" id="CHEBI:18420"/>
        <label>1</label>
    </ligand>
</feature>
<feature type="binding site" evidence="1">
    <location>
        <position position="9"/>
    </location>
    <ligand>
        <name>Mg(2+)</name>
        <dbReference type="ChEBI" id="CHEBI:18420"/>
        <label>2</label>
    </ligand>
</feature>
<feature type="binding site" evidence="1">
    <location>
        <position position="47"/>
    </location>
    <ligand>
        <name>Mg(2+)</name>
        <dbReference type="ChEBI" id="CHEBI:18420"/>
        <label>1</label>
    </ligand>
</feature>
<feature type="binding site" evidence="1">
    <location>
        <position position="69"/>
    </location>
    <ligand>
        <name>Mg(2+)</name>
        <dbReference type="ChEBI" id="CHEBI:18420"/>
        <label>1</label>
    </ligand>
</feature>
<feature type="binding site" evidence="1">
    <location>
        <position position="133"/>
    </location>
    <ligand>
        <name>Mg(2+)</name>
        <dbReference type="ChEBI" id="CHEBI:18420"/>
        <label>2</label>
    </ligand>
</feature>
<keyword id="KW-0963">Cytoplasm</keyword>
<keyword id="KW-0255">Endonuclease</keyword>
<keyword id="KW-0378">Hydrolase</keyword>
<keyword id="KW-0460">Magnesium</keyword>
<keyword id="KW-0479">Metal-binding</keyword>
<keyword id="KW-0540">Nuclease</keyword>
<keyword id="KW-1185">Reference proteome</keyword>
<evidence type="ECO:0000255" key="1">
    <source>
        <dbReference type="HAMAP-Rule" id="MF_00042"/>
    </source>
</evidence>
<evidence type="ECO:0000255" key="2">
    <source>
        <dbReference type="PROSITE-ProRule" id="PRU00408"/>
    </source>
</evidence>
<reference key="1">
    <citation type="journal article" date="2005" name="Infect. Immun.">
        <title>Whole-genome analyses of speciation events in pathogenic Brucellae.</title>
        <authorList>
            <person name="Chain P.S."/>
            <person name="Comerci D.J."/>
            <person name="Tolmasky M.E."/>
            <person name="Larimer F.W."/>
            <person name="Malfatti S.A."/>
            <person name="Vergez L.M."/>
            <person name="Aguero F."/>
            <person name="Land M.L."/>
            <person name="Ugalde R.A."/>
            <person name="Garcia E."/>
        </authorList>
    </citation>
    <scope>NUCLEOTIDE SEQUENCE [LARGE SCALE GENOMIC DNA]</scope>
    <source>
        <strain>2308</strain>
    </source>
</reference>
<accession>Q2YMI3</accession>
<sequence length="154" mass="17172">MKRIEAYTDGACSGNPGPGGWGALLRWNGNEKELKGGEAETTNNRMELMAAISALSALKEPCEVDLYTDSVYVRDGISGWIEGWKRNGWKTAAKKPVKNAELWQALDEARKAHKVTWHWIKGHAGHPENERADELARAGMEPFKYAGHRTLKVK</sequence>